<dbReference type="EMBL" id="CP000447">
    <property type="protein sequence ID" value="ABI73147.1"/>
    <property type="molecule type" value="Genomic_DNA"/>
</dbReference>
<dbReference type="RefSeq" id="WP_011638750.1">
    <property type="nucleotide sequence ID" value="NC_008345.1"/>
</dbReference>
<dbReference type="SMR" id="Q07XW7"/>
<dbReference type="STRING" id="318167.Sfri_3311"/>
<dbReference type="KEGG" id="sfr:Sfri_3311"/>
<dbReference type="eggNOG" id="COG1923">
    <property type="taxonomic scope" value="Bacteria"/>
</dbReference>
<dbReference type="HOGENOM" id="CLU_113688_2_2_6"/>
<dbReference type="OrthoDB" id="9799751at2"/>
<dbReference type="Proteomes" id="UP000000684">
    <property type="component" value="Chromosome"/>
</dbReference>
<dbReference type="GO" id="GO:0005829">
    <property type="term" value="C:cytosol"/>
    <property type="evidence" value="ECO:0007669"/>
    <property type="project" value="TreeGrafter"/>
</dbReference>
<dbReference type="GO" id="GO:0003723">
    <property type="term" value="F:RNA binding"/>
    <property type="evidence" value="ECO:0007669"/>
    <property type="project" value="UniProtKB-UniRule"/>
</dbReference>
<dbReference type="GO" id="GO:0006355">
    <property type="term" value="P:regulation of DNA-templated transcription"/>
    <property type="evidence" value="ECO:0007669"/>
    <property type="project" value="InterPro"/>
</dbReference>
<dbReference type="GO" id="GO:0043487">
    <property type="term" value="P:regulation of RNA stability"/>
    <property type="evidence" value="ECO:0007669"/>
    <property type="project" value="TreeGrafter"/>
</dbReference>
<dbReference type="GO" id="GO:0045974">
    <property type="term" value="P:regulation of translation, ncRNA-mediated"/>
    <property type="evidence" value="ECO:0007669"/>
    <property type="project" value="TreeGrafter"/>
</dbReference>
<dbReference type="CDD" id="cd01716">
    <property type="entry name" value="Hfq"/>
    <property type="match status" value="1"/>
</dbReference>
<dbReference type="FunFam" id="2.30.30.100:FF:000001">
    <property type="entry name" value="RNA-binding protein Hfq"/>
    <property type="match status" value="1"/>
</dbReference>
<dbReference type="Gene3D" id="2.30.30.100">
    <property type="match status" value="1"/>
</dbReference>
<dbReference type="HAMAP" id="MF_00436">
    <property type="entry name" value="Hfq"/>
    <property type="match status" value="1"/>
</dbReference>
<dbReference type="InterPro" id="IPR005001">
    <property type="entry name" value="Hfq"/>
</dbReference>
<dbReference type="InterPro" id="IPR010920">
    <property type="entry name" value="LSM_dom_sf"/>
</dbReference>
<dbReference type="InterPro" id="IPR047575">
    <property type="entry name" value="Sm"/>
</dbReference>
<dbReference type="NCBIfam" id="TIGR02383">
    <property type="entry name" value="Hfq"/>
    <property type="match status" value="1"/>
</dbReference>
<dbReference type="NCBIfam" id="NF001602">
    <property type="entry name" value="PRK00395.1"/>
    <property type="match status" value="1"/>
</dbReference>
<dbReference type="PANTHER" id="PTHR34772">
    <property type="entry name" value="RNA-BINDING PROTEIN HFQ"/>
    <property type="match status" value="1"/>
</dbReference>
<dbReference type="PANTHER" id="PTHR34772:SF1">
    <property type="entry name" value="RNA-BINDING PROTEIN HFQ"/>
    <property type="match status" value="1"/>
</dbReference>
<dbReference type="Pfam" id="PF17209">
    <property type="entry name" value="Hfq"/>
    <property type="match status" value="1"/>
</dbReference>
<dbReference type="SUPFAM" id="SSF50182">
    <property type="entry name" value="Sm-like ribonucleoproteins"/>
    <property type="match status" value="1"/>
</dbReference>
<dbReference type="PROSITE" id="PS52002">
    <property type="entry name" value="SM"/>
    <property type="match status" value="1"/>
</dbReference>
<organism>
    <name type="scientific">Shewanella frigidimarina (strain NCIMB 400)</name>
    <dbReference type="NCBI Taxonomy" id="318167"/>
    <lineage>
        <taxon>Bacteria</taxon>
        <taxon>Pseudomonadati</taxon>
        <taxon>Pseudomonadota</taxon>
        <taxon>Gammaproteobacteria</taxon>
        <taxon>Alteromonadales</taxon>
        <taxon>Shewanellaceae</taxon>
        <taxon>Shewanella</taxon>
    </lineage>
</organism>
<gene>
    <name evidence="1" type="primary">hfq</name>
    <name type="ordered locus">Sfri_3311</name>
</gene>
<proteinExistence type="inferred from homology"/>
<comment type="function">
    <text evidence="1">RNA chaperone that binds small regulatory RNA (sRNAs) and mRNAs to facilitate mRNA translational regulation in response to envelope stress, environmental stress and changes in metabolite concentrations. Also binds with high specificity to tRNAs.</text>
</comment>
<comment type="subunit">
    <text evidence="1">Homohexamer.</text>
</comment>
<comment type="similarity">
    <text evidence="1">Belongs to the Hfq family.</text>
</comment>
<sequence>MAKGQSLQDPFLNALRRERVPVSIYLVNGIKLQGQVESFDQFVILLKNTVSQMVYKHAISTVVPARPFNVSAHQGTAHGEESDAE</sequence>
<reference key="1">
    <citation type="submission" date="2006-08" db="EMBL/GenBank/DDBJ databases">
        <title>Complete sequence of Shewanella frigidimarina NCIMB 400.</title>
        <authorList>
            <consortium name="US DOE Joint Genome Institute"/>
            <person name="Copeland A."/>
            <person name="Lucas S."/>
            <person name="Lapidus A."/>
            <person name="Barry K."/>
            <person name="Detter J.C."/>
            <person name="Glavina del Rio T."/>
            <person name="Hammon N."/>
            <person name="Israni S."/>
            <person name="Dalin E."/>
            <person name="Tice H."/>
            <person name="Pitluck S."/>
            <person name="Fredrickson J.K."/>
            <person name="Kolker E."/>
            <person name="McCuel L.A."/>
            <person name="DiChristina T."/>
            <person name="Nealson K.H."/>
            <person name="Newman D."/>
            <person name="Tiedje J.M."/>
            <person name="Zhou J."/>
            <person name="Romine M.F."/>
            <person name="Culley D.E."/>
            <person name="Serres M."/>
            <person name="Chertkov O."/>
            <person name="Brettin T."/>
            <person name="Bruce D."/>
            <person name="Han C."/>
            <person name="Tapia R."/>
            <person name="Gilna P."/>
            <person name="Schmutz J."/>
            <person name="Larimer F."/>
            <person name="Land M."/>
            <person name="Hauser L."/>
            <person name="Kyrpides N."/>
            <person name="Mikhailova N."/>
            <person name="Richardson P."/>
        </authorList>
    </citation>
    <scope>NUCLEOTIDE SEQUENCE [LARGE SCALE GENOMIC DNA]</scope>
    <source>
        <strain>NCIMB 400</strain>
    </source>
</reference>
<keyword id="KW-1185">Reference proteome</keyword>
<keyword id="KW-0694">RNA-binding</keyword>
<keyword id="KW-0346">Stress response</keyword>
<name>HFQ_SHEFN</name>
<feature type="chain" id="PRO_0000265188" description="RNA-binding protein Hfq">
    <location>
        <begin position="1"/>
        <end position="85"/>
    </location>
</feature>
<feature type="domain" description="Sm" evidence="2">
    <location>
        <begin position="9"/>
        <end position="68"/>
    </location>
</feature>
<protein>
    <recommendedName>
        <fullName evidence="1">RNA-binding protein Hfq</fullName>
    </recommendedName>
</protein>
<evidence type="ECO:0000255" key="1">
    <source>
        <dbReference type="HAMAP-Rule" id="MF_00436"/>
    </source>
</evidence>
<evidence type="ECO:0000255" key="2">
    <source>
        <dbReference type="PROSITE-ProRule" id="PRU01346"/>
    </source>
</evidence>
<accession>Q07XW7</accession>